<feature type="chain" id="PRO_1000212766" description="Large ribosomal subunit protein uL11">
    <location>
        <begin position="1"/>
        <end position="146"/>
    </location>
</feature>
<protein>
    <recommendedName>
        <fullName evidence="1">Large ribosomal subunit protein uL11</fullName>
    </recommendedName>
    <alternativeName>
        <fullName evidence="2">50S ribosomal protein L11</fullName>
    </alternativeName>
</protein>
<gene>
    <name evidence="1" type="primary">rplK</name>
    <name type="ordered locus">ckrop_1879</name>
</gene>
<proteinExistence type="inferred from homology"/>
<organism>
    <name type="scientific">Corynebacterium kroppenstedtii (strain DSM 44385 / JCM 11950 / CIP 105744 / CCUG 35717)</name>
    <dbReference type="NCBI Taxonomy" id="645127"/>
    <lineage>
        <taxon>Bacteria</taxon>
        <taxon>Bacillati</taxon>
        <taxon>Actinomycetota</taxon>
        <taxon>Actinomycetes</taxon>
        <taxon>Mycobacteriales</taxon>
        <taxon>Corynebacteriaceae</taxon>
        <taxon>Corynebacterium</taxon>
    </lineage>
</organism>
<name>RL11_CORK4</name>
<comment type="function">
    <text evidence="1">Forms part of the ribosomal stalk which helps the ribosome interact with GTP-bound translation factors.</text>
</comment>
<comment type="subunit">
    <text evidence="1">Part of the ribosomal stalk of the 50S ribosomal subunit. Interacts with L10 and the large rRNA to form the base of the stalk. L10 forms an elongated spine to which L12 dimers bind in a sequential fashion forming a multimeric L10(L12)X complex.</text>
</comment>
<comment type="PTM">
    <text evidence="1">One or more lysine residues are methylated.</text>
</comment>
<comment type="similarity">
    <text evidence="1">Belongs to the universal ribosomal protein uL11 family.</text>
</comment>
<reference key="1">
    <citation type="journal article" date="2008" name="J. Biotechnol.">
        <title>Ultrafast pyrosequencing of Corynebacterium kroppenstedtii DSM44385 revealed insights into the physiology of a lipophilic corynebacterium that lacks mycolic acids.</title>
        <authorList>
            <person name="Tauch A."/>
            <person name="Schneider J."/>
            <person name="Szczepanowski R."/>
            <person name="Tilker A."/>
            <person name="Viehoever P."/>
            <person name="Gartemann K.-H."/>
            <person name="Arnold W."/>
            <person name="Blom J."/>
            <person name="Brinkrolf K."/>
            <person name="Brune I."/>
            <person name="Goetker S."/>
            <person name="Weisshaar B."/>
            <person name="Goesmann A."/>
            <person name="Droege M."/>
            <person name="Puehler A."/>
        </authorList>
    </citation>
    <scope>NUCLEOTIDE SEQUENCE [LARGE SCALE GENOMIC DNA]</scope>
    <source>
        <strain>DSM 44385 / JCM 11950 / CIP 105744 / CCUG 35717</strain>
    </source>
</reference>
<keyword id="KW-0488">Methylation</keyword>
<keyword id="KW-1185">Reference proteome</keyword>
<keyword id="KW-0687">Ribonucleoprotein</keyword>
<keyword id="KW-0689">Ribosomal protein</keyword>
<keyword id="KW-0694">RNA-binding</keyword>
<keyword id="KW-0699">rRNA-binding</keyword>
<evidence type="ECO:0000255" key="1">
    <source>
        <dbReference type="HAMAP-Rule" id="MF_00736"/>
    </source>
</evidence>
<evidence type="ECO:0000305" key="2"/>
<dbReference type="EMBL" id="CP001620">
    <property type="protein sequence ID" value="ACR18594.1"/>
    <property type="molecule type" value="Genomic_DNA"/>
</dbReference>
<dbReference type="RefSeq" id="WP_012732481.1">
    <property type="nucleotide sequence ID" value="NC_012704.1"/>
</dbReference>
<dbReference type="SMR" id="C4LL89"/>
<dbReference type="STRING" id="645127.ckrop_1879"/>
<dbReference type="GeneID" id="92726670"/>
<dbReference type="KEGG" id="ckp:ckrop_1879"/>
<dbReference type="eggNOG" id="COG0080">
    <property type="taxonomic scope" value="Bacteria"/>
</dbReference>
<dbReference type="HOGENOM" id="CLU_074237_2_0_11"/>
<dbReference type="OrthoDB" id="9802408at2"/>
<dbReference type="Proteomes" id="UP000001473">
    <property type="component" value="Chromosome"/>
</dbReference>
<dbReference type="GO" id="GO:0022625">
    <property type="term" value="C:cytosolic large ribosomal subunit"/>
    <property type="evidence" value="ECO:0007669"/>
    <property type="project" value="TreeGrafter"/>
</dbReference>
<dbReference type="GO" id="GO:0070180">
    <property type="term" value="F:large ribosomal subunit rRNA binding"/>
    <property type="evidence" value="ECO:0007669"/>
    <property type="project" value="UniProtKB-UniRule"/>
</dbReference>
<dbReference type="GO" id="GO:0003735">
    <property type="term" value="F:structural constituent of ribosome"/>
    <property type="evidence" value="ECO:0007669"/>
    <property type="project" value="InterPro"/>
</dbReference>
<dbReference type="GO" id="GO:0006412">
    <property type="term" value="P:translation"/>
    <property type="evidence" value="ECO:0007669"/>
    <property type="project" value="UniProtKB-UniRule"/>
</dbReference>
<dbReference type="CDD" id="cd00349">
    <property type="entry name" value="Ribosomal_L11"/>
    <property type="match status" value="1"/>
</dbReference>
<dbReference type="FunFam" id="1.10.10.250:FF:000001">
    <property type="entry name" value="50S ribosomal protein L11"/>
    <property type="match status" value="1"/>
</dbReference>
<dbReference type="FunFam" id="3.30.1550.10:FF:000001">
    <property type="entry name" value="50S ribosomal protein L11"/>
    <property type="match status" value="1"/>
</dbReference>
<dbReference type="Gene3D" id="1.10.10.250">
    <property type="entry name" value="Ribosomal protein L11, C-terminal domain"/>
    <property type="match status" value="1"/>
</dbReference>
<dbReference type="Gene3D" id="3.30.1550.10">
    <property type="entry name" value="Ribosomal protein L11/L12, N-terminal domain"/>
    <property type="match status" value="1"/>
</dbReference>
<dbReference type="HAMAP" id="MF_00736">
    <property type="entry name" value="Ribosomal_uL11"/>
    <property type="match status" value="1"/>
</dbReference>
<dbReference type="InterPro" id="IPR000911">
    <property type="entry name" value="Ribosomal_uL11"/>
</dbReference>
<dbReference type="InterPro" id="IPR006519">
    <property type="entry name" value="Ribosomal_uL11_bac-typ"/>
</dbReference>
<dbReference type="InterPro" id="IPR020783">
    <property type="entry name" value="Ribosomal_uL11_C"/>
</dbReference>
<dbReference type="InterPro" id="IPR036769">
    <property type="entry name" value="Ribosomal_uL11_C_sf"/>
</dbReference>
<dbReference type="InterPro" id="IPR020785">
    <property type="entry name" value="Ribosomal_uL11_CS"/>
</dbReference>
<dbReference type="InterPro" id="IPR020784">
    <property type="entry name" value="Ribosomal_uL11_N"/>
</dbReference>
<dbReference type="InterPro" id="IPR036796">
    <property type="entry name" value="Ribosomal_uL11_N_sf"/>
</dbReference>
<dbReference type="NCBIfam" id="TIGR01632">
    <property type="entry name" value="L11_bact"/>
    <property type="match status" value="1"/>
</dbReference>
<dbReference type="PANTHER" id="PTHR11661">
    <property type="entry name" value="60S RIBOSOMAL PROTEIN L12"/>
    <property type="match status" value="1"/>
</dbReference>
<dbReference type="PANTHER" id="PTHR11661:SF1">
    <property type="entry name" value="LARGE RIBOSOMAL SUBUNIT PROTEIN UL11M"/>
    <property type="match status" value="1"/>
</dbReference>
<dbReference type="Pfam" id="PF00298">
    <property type="entry name" value="Ribosomal_L11"/>
    <property type="match status" value="1"/>
</dbReference>
<dbReference type="Pfam" id="PF03946">
    <property type="entry name" value="Ribosomal_L11_N"/>
    <property type="match status" value="1"/>
</dbReference>
<dbReference type="SMART" id="SM00649">
    <property type="entry name" value="RL11"/>
    <property type="match status" value="1"/>
</dbReference>
<dbReference type="SUPFAM" id="SSF54747">
    <property type="entry name" value="Ribosomal L11/L12e N-terminal domain"/>
    <property type="match status" value="1"/>
</dbReference>
<dbReference type="SUPFAM" id="SSF46906">
    <property type="entry name" value="Ribosomal protein L11, C-terminal domain"/>
    <property type="match status" value="1"/>
</dbReference>
<dbReference type="PROSITE" id="PS00359">
    <property type="entry name" value="RIBOSOMAL_L11"/>
    <property type="match status" value="1"/>
</dbReference>
<accession>C4LL89</accession>
<sequence length="146" mass="15483">MAPKKKVSGFIKLQIQAGQANPAPPVGPALGAHGVNIMEFCKAYNAATEDQRGNVVPVEITVYEDRSFTFKLKTPPAAKLLLKAANLQKGSGEPNTNKVGSVTWDQCKEIAQTKMEDLNANDLDMGARIIAGTARSMGIEVKGATA</sequence>